<keyword id="KW-0997">Cell inner membrane</keyword>
<keyword id="KW-1003">Cell membrane</keyword>
<keyword id="KW-0249">Electron transport</keyword>
<keyword id="KW-0472">Membrane</keyword>
<keyword id="KW-1185">Reference proteome</keyword>
<keyword id="KW-1278">Translocase</keyword>
<keyword id="KW-0812">Transmembrane</keyword>
<keyword id="KW-1133">Transmembrane helix</keyword>
<keyword id="KW-0813">Transport</keyword>
<feature type="chain" id="PRO_0000214272" description="Ion-translocating oxidoreductase complex subunit E">
    <location>
        <begin position="1"/>
        <end position="227"/>
    </location>
</feature>
<feature type="transmembrane region" description="Helical" evidence="1">
    <location>
        <begin position="57"/>
        <end position="77"/>
    </location>
</feature>
<feature type="transmembrane region" description="Helical" evidence="1">
    <location>
        <begin position="89"/>
        <end position="109"/>
    </location>
</feature>
<feature type="transmembrane region" description="Helical" evidence="1">
    <location>
        <begin position="111"/>
        <end position="131"/>
    </location>
</feature>
<feature type="transmembrane region" description="Helical" evidence="1">
    <location>
        <begin position="146"/>
        <end position="166"/>
    </location>
</feature>
<feature type="transmembrane region" description="Helical" evidence="1">
    <location>
        <begin position="200"/>
        <end position="220"/>
    </location>
</feature>
<accession>Q7VNT1</accession>
<dbReference type="EC" id="7.-.-.-" evidence="1"/>
<dbReference type="EMBL" id="AE017143">
    <property type="protein sequence ID" value="AAP95368.1"/>
    <property type="molecule type" value="Genomic_DNA"/>
</dbReference>
<dbReference type="RefSeq" id="WP_010944421.1">
    <property type="nucleotide sequence ID" value="NC_002940.2"/>
</dbReference>
<dbReference type="SMR" id="Q7VNT1"/>
<dbReference type="STRING" id="233412.HD_0403"/>
<dbReference type="KEGG" id="hdu:HD_0403"/>
<dbReference type="eggNOG" id="COG4660">
    <property type="taxonomic scope" value="Bacteria"/>
</dbReference>
<dbReference type="HOGENOM" id="CLU_046659_1_0_6"/>
<dbReference type="Proteomes" id="UP000001022">
    <property type="component" value="Chromosome"/>
</dbReference>
<dbReference type="GO" id="GO:0005886">
    <property type="term" value="C:plasma membrane"/>
    <property type="evidence" value="ECO:0007669"/>
    <property type="project" value="UniProtKB-SubCell"/>
</dbReference>
<dbReference type="GO" id="GO:0022900">
    <property type="term" value="P:electron transport chain"/>
    <property type="evidence" value="ECO:0007669"/>
    <property type="project" value="UniProtKB-UniRule"/>
</dbReference>
<dbReference type="HAMAP" id="MF_00478">
    <property type="entry name" value="RsxE_RnfE"/>
    <property type="match status" value="1"/>
</dbReference>
<dbReference type="InterPro" id="IPR003667">
    <property type="entry name" value="NqrDE/RnfAE"/>
</dbReference>
<dbReference type="InterPro" id="IPR010968">
    <property type="entry name" value="RnfE"/>
</dbReference>
<dbReference type="NCBIfam" id="NF009070">
    <property type="entry name" value="PRK12405.1"/>
    <property type="match status" value="1"/>
</dbReference>
<dbReference type="NCBIfam" id="TIGR01948">
    <property type="entry name" value="rnfE"/>
    <property type="match status" value="1"/>
</dbReference>
<dbReference type="PANTHER" id="PTHR30586">
    <property type="entry name" value="ELECTRON TRANSPORT COMPLEX PROTEIN RNFE"/>
    <property type="match status" value="1"/>
</dbReference>
<dbReference type="PANTHER" id="PTHR30586:SF0">
    <property type="entry name" value="ION-TRANSLOCATING OXIDOREDUCTASE COMPLEX SUBUNIT E"/>
    <property type="match status" value="1"/>
</dbReference>
<dbReference type="Pfam" id="PF02508">
    <property type="entry name" value="Rnf-Nqr"/>
    <property type="match status" value="1"/>
</dbReference>
<dbReference type="PIRSF" id="PIRSF006102">
    <property type="entry name" value="NQR_DE"/>
    <property type="match status" value="1"/>
</dbReference>
<gene>
    <name evidence="1" type="primary">rnfE</name>
    <name type="ordered locus">HD_0403</name>
</gene>
<proteinExistence type="inferred from homology"/>
<organism>
    <name type="scientific">Haemophilus ducreyi (strain 35000HP / ATCC 700724)</name>
    <dbReference type="NCBI Taxonomy" id="233412"/>
    <lineage>
        <taxon>Bacteria</taxon>
        <taxon>Pseudomonadati</taxon>
        <taxon>Pseudomonadota</taxon>
        <taxon>Gammaproteobacteria</taxon>
        <taxon>Pasteurellales</taxon>
        <taxon>Pasteurellaceae</taxon>
        <taxon>Haemophilus</taxon>
    </lineage>
</organism>
<protein>
    <recommendedName>
        <fullName evidence="1">Ion-translocating oxidoreductase complex subunit E</fullName>
        <ecNumber evidence="1">7.-.-.-</ecNumber>
    </recommendedName>
    <alternativeName>
        <fullName evidence="1">Rnf electron transport complex subunit E</fullName>
    </alternativeName>
</protein>
<evidence type="ECO:0000255" key="1">
    <source>
        <dbReference type="HAMAP-Rule" id="MF_00478"/>
    </source>
</evidence>
<sequence length="227" mass="24461">MADNQIPITQIEDGTVKQPSVWRNLLIDGLWKNNGALVQLLGLCPLLAVSNSVTNALGLGLATLFVLLCTNVTISLFRQMIPHDIRIPIYVMVIATVVTAVQLLMNAFAYPVYQSLGIFIPLIVTNCIVIGRAEAYASKHQVHHSAFDGLATGLGMTLSLVLLGAIRELIGNGTLFDGLDLLFGDWAKVLRLDLLQLDSGLLLAILPPGAFIGLGLILAVKNLFDHK</sequence>
<reference key="1">
    <citation type="submission" date="2003-06" db="EMBL/GenBank/DDBJ databases">
        <title>The complete genome sequence of Haemophilus ducreyi.</title>
        <authorList>
            <person name="Munson R.S. Jr."/>
            <person name="Ray W.C."/>
            <person name="Mahairas G."/>
            <person name="Sabo P."/>
            <person name="Mungur R."/>
            <person name="Johnson L."/>
            <person name="Nguyen D."/>
            <person name="Wang J."/>
            <person name="Forst C."/>
            <person name="Hood L."/>
        </authorList>
    </citation>
    <scope>NUCLEOTIDE SEQUENCE [LARGE SCALE GENOMIC DNA]</scope>
    <source>
        <strain>35000HP / ATCC 700724</strain>
    </source>
</reference>
<name>RNFE_HAEDU</name>
<comment type="function">
    <text evidence="1">Part of a membrane-bound complex that couples electron transfer with translocation of ions across the membrane.</text>
</comment>
<comment type="subunit">
    <text evidence="1">The complex is composed of six subunits: RnfA, RnfB, RnfC, RnfD, RnfE and RnfG.</text>
</comment>
<comment type="subcellular location">
    <subcellularLocation>
        <location evidence="1">Cell inner membrane</location>
        <topology evidence="1">Multi-pass membrane protein</topology>
    </subcellularLocation>
</comment>
<comment type="similarity">
    <text evidence="1">Belongs to the NqrDE/RnfAE family.</text>
</comment>